<reference key="1">
    <citation type="journal article" date="2003" name="Nat. Genet.">
        <title>Comparative analysis of the genome sequences of Bordetella pertussis, Bordetella parapertussis and Bordetella bronchiseptica.</title>
        <authorList>
            <person name="Parkhill J."/>
            <person name="Sebaihia M."/>
            <person name="Preston A."/>
            <person name="Murphy L.D."/>
            <person name="Thomson N.R."/>
            <person name="Harris D.E."/>
            <person name="Holden M.T.G."/>
            <person name="Churcher C.M."/>
            <person name="Bentley S.D."/>
            <person name="Mungall K.L."/>
            <person name="Cerdeno-Tarraga A.-M."/>
            <person name="Temple L."/>
            <person name="James K.D."/>
            <person name="Harris B."/>
            <person name="Quail M.A."/>
            <person name="Achtman M."/>
            <person name="Atkin R."/>
            <person name="Baker S."/>
            <person name="Basham D."/>
            <person name="Bason N."/>
            <person name="Cherevach I."/>
            <person name="Chillingworth T."/>
            <person name="Collins M."/>
            <person name="Cronin A."/>
            <person name="Davis P."/>
            <person name="Doggett J."/>
            <person name="Feltwell T."/>
            <person name="Goble A."/>
            <person name="Hamlin N."/>
            <person name="Hauser H."/>
            <person name="Holroyd S."/>
            <person name="Jagels K."/>
            <person name="Leather S."/>
            <person name="Moule S."/>
            <person name="Norberczak H."/>
            <person name="O'Neil S."/>
            <person name="Ormond D."/>
            <person name="Price C."/>
            <person name="Rabbinowitsch E."/>
            <person name="Rutter S."/>
            <person name="Sanders M."/>
            <person name="Saunders D."/>
            <person name="Seeger K."/>
            <person name="Sharp S."/>
            <person name="Simmonds M."/>
            <person name="Skelton J."/>
            <person name="Squares R."/>
            <person name="Squares S."/>
            <person name="Stevens K."/>
            <person name="Unwin L."/>
            <person name="Whitehead S."/>
            <person name="Barrell B.G."/>
            <person name="Maskell D.J."/>
        </authorList>
    </citation>
    <scope>NUCLEOTIDE SEQUENCE [LARGE SCALE GENOMIC DNA]</scope>
    <source>
        <strain>Tohama I / ATCC BAA-589 / NCTC 13251</strain>
    </source>
</reference>
<reference key="2">
    <citation type="journal article" date="2003" name="Mol. Microbiol.">
        <title>Bordetella bronchiseptica PagP is a Bvg-regulated lipid A palmitoyl transferase that is required for persistent colonization of the mouse respiratory tract.</title>
        <authorList>
            <person name="Preston A."/>
            <person name="Maxim E."/>
            <person name="Toland E."/>
            <person name="Pishko E.J."/>
            <person name="Harvill E.T."/>
            <person name="Caroff M."/>
            <person name="Maskell D.J."/>
        </authorList>
    </citation>
    <scope>LACK OF EXPRESSION</scope>
</reference>
<proteinExistence type="inferred from homology"/>
<comment type="function">
    <text evidence="1">Transfers a fatty acid residue from the sn-1 position of a phospholipid to the N-linked hydroxyfatty acid chain on the proximal unit of lipid A or its precursors.</text>
</comment>
<comment type="catalytic activity">
    <reaction evidence="1">
        <text>a lipid A + a 1,2-diacyl-sn-glycero-3-phosphocholine = a hepta-acyl lipid A + a 2-acyl-sn-glycero-3-phosphocholine</text>
        <dbReference type="Rhea" id="RHEA:74275"/>
        <dbReference type="ChEBI" id="CHEBI:57643"/>
        <dbReference type="ChEBI" id="CHEBI:57875"/>
        <dbReference type="ChEBI" id="CHEBI:193141"/>
        <dbReference type="ChEBI" id="CHEBI:193142"/>
        <dbReference type="EC" id="2.3.1.251"/>
    </reaction>
</comment>
<comment type="catalytic activity">
    <reaction evidence="1">
        <text>a lipid IVA + a 1,2-diacyl-sn-glycero-3-phosphocholine = a lipid IVB + a 2-acyl-sn-glycero-3-phosphocholine</text>
        <dbReference type="Rhea" id="RHEA:74279"/>
        <dbReference type="ChEBI" id="CHEBI:57643"/>
        <dbReference type="ChEBI" id="CHEBI:57875"/>
        <dbReference type="ChEBI" id="CHEBI:176425"/>
        <dbReference type="ChEBI" id="CHEBI:193143"/>
        <dbReference type="EC" id="2.3.1.251"/>
    </reaction>
</comment>
<comment type="catalytic activity">
    <reaction evidence="1">
        <text>a lipid IIA + a 1,2-diacyl-sn-glycero-3-phosphocholine = a lipid IIB + a 2-acyl-sn-glycero-3-phosphocholine</text>
        <dbReference type="Rhea" id="RHEA:74283"/>
        <dbReference type="ChEBI" id="CHEBI:57643"/>
        <dbReference type="ChEBI" id="CHEBI:57875"/>
        <dbReference type="ChEBI" id="CHEBI:193144"/>
        <dbReference type="ChEBI" id="CHEBI:193145"/>
        <dbReference type="EC" id="2.3.1.251"/>
    </reaction>
</comment>
<comment type="subunit">
    <text evidence="1">Homodimer.</text>
</comment>
<comment type="subcellular location">
    <subcellularLocation>
        <location evidence="1 2">Cell outer membrane</location>
        <topology evidence="1 2">Lipid-anchor</topology>
    </subcellularLocation>
</comment>
<comment type="similarity">
    <text evidence="1 2">Belongs to the lipid A palmitoyltransferase family.</text>
</comment>
<comment type="caution">
    <text evidence="3">According to PubMed:12694617, it appears that PagP is not expressed because of disruption of the putative promoter region by insertion of an IS element.</text>
</comment>
<protein>
    <recommendedName>
        <fullName evidence="1">Lipid A acyltransferase PagP</fullName>
        <ecNumber evidence="1">2.3.1.251</ecNumber>
    </recommendedName>
    <alternativeName>
        <fullName evidence="1">Lipid A acylation protein</fullName>
    </alternativeName>
</protein>
<evidence type="ECO:0000255" key="1">
    <source>
        <dbReference type="HAMAP-Rule" id="MF_00837"/>
    </source>
</evidence>
<evidence type="ECO:0000305" key="2"/>
<evidence type="ECO:0000305" key="3">
    <source>
    </source>
</evidence>
<sequence length="182" mass="20276">MTQYFRSLAFFLLPVPATAMACDGWPSWARGACQRVDQIWNEGGNDLYLTGYSWHNRAMYSSDKIRSFNELAWGGGLGKSIYDEDGDWQGLYAMAFLDSHSDIEPIAGYGFQKIGRIGADTRLGIGYTVFLTSRSDIMSRVPFPGILPLVSAGYRDATLYATYIPGGKGNGNVLFMFGRWEF</sequence>
<dbReference type="EC" id="2.3.1.251" evidence="1"/>
<dbReference type="EMBL" id="BX640420">
    <property type="protein sequence ID" value="CAE43277.1"/>
    <property type="molecule type" value="Genomic_DNA"/>
</dbReference>
<dbReference type="RefSeq" id="NP_881581.1">
    <property type="nucleotide sequence ID" value="NC_002929.2"/>
</dbReference>
<dbReference type="RefSeq" id="WP_010931248.1">
    <property type="nucleotide sequence ID" value="NZ_CP039022.1"/>
</dbReference>
<dbReference type="SMR" id="Q7VUS0"/>
<dbReference type="STRING" id="257313.BP3006"/>
<dbReference type="PaxDb" id="257313-BP3006"/>
<dbReference type="GeneID" id="69602929"/>
<dbReference type="KEGG" id="bpe:BP3006"/>
<dbReference type="PATRIC" id="fig|257313.5.peg.3251"/>
<dbReference type="eggNOG" id="ENOG502Z7SY">
    <property type="taxonomic scope" value="Bacteria"/>
</dbReference>
<dbReference type="HOGENOM" id="CLU_104099_0_0_4"/>
<dbReference type="Proteomes" id="UP000002676">
    <property type="component" value="Chromosome"/>
</dbReference>
<dbReference type="GO" id="GO:0009279">
    <property type="term" value="C:cell outer membrane"/>
    <property type="evidence" value="ECO:0007669"/>
    <property type="project" value="UniProtKB-SubCell"/>
</dbReference>
<dbReference type="GO" id="GO:0016416">
    <property type="term" value="F:O-palmitoyltransferase activity"/>
    <property type="evidence" value="ECO:0000250"/>
    <property type="project" value="UniProtKB"/>
</dbReference>
<dbReference type="GO" id="GO:0009245">
    <property type="term" value="P:lipid A biosynthetic process"/>
    <property type="evidence" value="ECO:0000250"/>
    <property type="project" value="UniProtKB"/>
</dbReference>
<dbReference type="FunFam" id="2.40.160.20:FF:000002">
    <property type="entry name" value="Lipid A palmitoyltransferase PagP"/>
    <property type="match status" value="1"/>
</dbReference>
<dbReference type="Gene3D" id="2.40.160.20">
    <property type="match status" value="1"/>
</dbReference>
<dbReference type="HAMAP" id="MF_00837">
    <property type="entry name" value="PagP_transferase"/>
    <property type="match status" value="1"/>
</dbReference>
<dbReference type="InterPro" id="IPR009746">
    <property type="entry name" value="LipidA_acyl_PagP"/>
</dbReference>
<dbReference type="InterPro" id="IPR011250">
    <property type="entry name" value="OMP/PagP_b-brl"/>
</dbReference>
<dbReference type="NCBIfam" id="NF008271">
    <property type="entry name" value="PRK11045.1"/>
    <property type="match status" value="1"/>
</dbReference>
<dbReference type="Pfam" id="PF07017">
    <property type="entry name" value="PagP"/>
    <property type="match status" value="1"/>
</dbReference>
<dbReference type="SUPFAM" id="SSF56925">
    <property type="entry name" value="OMPA-like"/>
    <property type="match status" value="1"/>
</dbReference>
<dbReference type="PROSITE" id="PS51257">
    <property type="entry name" value="PROKAR_LIPOPROTEIN"/>
    <property type="match status" value="1"/>
</dbReference>
<keyword id="KW-0012">Acyltransferase</keyword>
<keyword id="KW-0998">Cell outer membrane</keyword>
<keyword id="KW-0449">Lipoprotein</keyword>
<keyword id="KW-0472">Membrane</keyword>
<keyword id="KW-0564">Palmitate</keyword>
<keyword id="KW-1185">Reference proteome</keyword>
<keyword id="KW-0732">Signal</keyword>
<keyword id="KW-0808">Transferase</keyword>
<organism>
    <name type="scientific">Bordetella pertussis (strain Tohama I / ATCC BAA-589 / NCTC 13251)</name>
    <dbReference type="NCBI Taxonomy" id="257313"/>
    <lineage>
        <taxon>Bacteria</taxon>
        <taxon>Pseudomonadati</taxon>
        <taxon>Pseudomonadota</taxon>
        <taxon>Betaproteobacteria</taxon>
        <taxon>Burkholderiales</taxon>
        <taxon>Alcaligenaceae</taxon>
        <taxon>Bordetella</taxon>
    </lineage>
</organism>
<feature type="signal peptide" evidence="1">
    <location>
        <begin position="1"/>
        <end position="21"/>
    </location>
</feature>
<feature type="chain" id="PRO_0000414429" description="Lipid A acyltransferase PagP">
    <location>
        <begin position="22"/>
        <end position="182"/>
    </location>
</feature>
<feature type="active site" evidence="1">
    <location>
        <position position="55"/>
    </location>
</feature>
<feature type="active site" evidence="1">
    <location>
        <position position="98"/>
    </location>
</feature>
<feature type="active site" evidence="1">
    <location>
        <position position="99"/>
    </location>
</feature>
<feature type="site" description="Role in lipopolysaccharide recognition" evidence="1">
    <location>
        <position position="64"/>
    </location>
</feature>
<feature type="lipid moiety-binding region" description="N-palmitoyl cysteine" evidence="1">
    <location>
        <position position="22"/>
    </location>
</feature>
<feature type="lipid moiety-binding region" description="S-diacylglycerol cysteine" evidence="1">
    <location>
        <position position="22"/>
    </location>
</feature>
<accession>Q7VUS0</accession>
<name>PAGP_BORPE</name>
<gene>
    <name evidence="1" type="primary">pagP</name>
    <name type="ordered locus">BP3006</name>
</gene>